<keyword id="KW-0963">Cytoplasm</keyword>
<keyword id="KW-0269">Exonuclease</keyword>
<keyword id="KW-0378">Hydrolase</keyword>
<keyword id="KW-0540">Nuclease</keyword>
<keyword id="KW-0694">RNA-binding</keyword>
<feature type="chain" id="PRO_1000063892" description="Exoribonuclease 2">
    <location>
        <begin position="1"/>
        <end position="659"/>
    </location>
</feature>
<feature type="domain" description="RNB" evidence="1">
    <location>
        <begin position="189"/>
        <end position="531"/>
    </location>
</feature>
<feature type="domain" description="S1 motif" evidence="2">
    <location>
        <begin position="576"/>
        <end position="658"/>
    </location>
</feature>
<comment type="function">
    <text evidence="2">Involved in mRNA degradation. Hydrolyzes single-stranded polyribonucleotides processively in the 3' to 5' direction.</text>
</comment>
<comment type="catalytic activity">
    <reaction evidence="2">
        <text>Exonucleolytic cleavage in the 3'- to 5'-direction to yield nucleoside 5'-phosphates.</text>
        <dbReference type="EC" id="3.1.13.1"/>
    </reaction>
</comment>
<comment type="subcellular location">
    <subcellularLocation>
        <location evidence="2">Cytoplasm</location>
    </subcellularLocation>
</comment>
<comment type="similarity">
    <text evidence="2">Belongs to the RNR ribonuclease family. RNase II subfamily.</text>
</comment>
<organism>
    <name type="scientific">Haemophilus influenzae (strain PittGG)</name>
    <dbReference type="NCBI Taxonomy" id="374931"/>
    <lineage>
        <taxon>Bacteria</taxon>
        <taxon>Pseudomonadati</taxon>
        <taxon>Pseudomonadota</taxon>
        <taxon>Gammaproteobacteria</taxon>
        <taxon>Pasteurellales</taxon>
        <taxon>Pasteurellaceae</taxon>
        <taxon>Haemophilus</taxon>
    </lineage>
</organism>
<name>RNB_HAEIG</name>
<protein>
    <recommendedName>
        <fullName evidence="2">Exoribonuclease 2</fullName>
        <ecNumber evidence="2">3.1.13.1</ecNumber>
    </recommendedName>
    <alternativeName>
        <fullName evidence="2">Exoribonuclease II</fullName>
        <shortName evidence="2">RNase II</shortName>
        <shortName evidence="2">Ribonuclease II</shortName>
    </alternativeName>
</protein>
<dbReference type="EC" id="3.1.13.1" evidence="2"/>
<dbReference type="EMBL" id="CP000672">
    <property type="protein sequence ID" value="ABQ99518.1"/>
    <property type="molecule type" value="Genomic_DNA"/>
</dbReference>
<dbReference type="SMR" id="A5UFG3"/>
<dbReference type="KEGG" id="hiq:CGSHiGG_02405"/>
<dbReference type="HOGENOM" id="CLU_002333_7_3_6"/>
<dbReference type="Proteomes" id="UP000001990">
    <property type="component" value="Chromosome"/>
</dbReference>
<dbReference type="GO" id="GO:0005829">
    <property type="term" value="C:cytosol"/>
    <property type="evidence" value="ECO:0007669"/>
    <property type="project" value="UniProtKB-ARBA"/>
</dbReference>
<dbReference type="GO" id="GO:0008859">
    <property type="term" value="F:exoribonuclease II activity"/>
    <property type="evidence" value="ECO:0007669"/>
    <property type="project" value="UniProtKB-UniRule"/>
</dbReference>
<dbReference type="GO" id="GO:0003723">
    <property type="term" value="F:RNA binding"/>
    <property type="evidence" value="ECO:0007669"/>
    <property type="project" value="UniProtKB-KW"/>
</dbReference>
<dbReference type="GO" id="GO:0006402">
    <property type="term" value="P:mRNA catabolic process"/>
    <property type="evidence" value="ECO:0007669"/>
    <property type="project" value="UniProtKB-UniRule"/>
</dbReference>
<dbReference type="Gene3D" id="2.40.50.640">
    <property type="match status" value="1"/>
</dbReference>
<dbReference type="Gene3D" id="2.40.50.140">
    <property type="entry name" value="Nucleic acid-binding proteins"/>
    <property type="match status" value="2"/>
</dbReference>
<dbReference type="HAMAP" id="MF_01036">
    <property type="entry name" value="RNase_II"/>
    <property type="match status" value="1"/>
</dbReference>
<dbReference type="InterPro" id="IPR011129">
    <property type="entry name" value="CSD"/>
</dbReference>
<dbReference type="InterPro" id="IPR012340">
    <property type="entry name" value="NA-bd_OB-fold"/>
</dbReference>
<dbReference type="InterPro" id="IPR013223">
    <property type="entry name" value="RNase_B_OB_dom"/>
</dbReference>
<dbReference type="InterPro" id="IPR011804">
    <property type="entry name" value="RNase_II"/>
</dbReference>
<dbReference type="InterPro" id="IPR001900">
    <property type="entry name" value="RNase_II/R"/>
</dbReference>
<dbReference type="InterPro" id="IPR022966">
    <property type="entry name" value="RNase_II/R_CS"/>
</dbReference>
<dbReference type="InterPro" id="IPR004476">
    <property type="entry name" value="RNase_II/RNase_R"/>
</dbReference>
<dbReference type="InterPro" id="IPR050180">
    <property type="entry name" value="RNR_Ribonuclease"/>
</dbReference>
<dbReference type="InterPro" id="IPR003029">
    <property type="entry name" value="S1_domain"/>
</dbReference>
<dbReference type="NCBIfam" id="TIGR00358">
    <property type="entry name" value="3_prime_RNase"/>
    <property type="match status" value="1"/>
</dbReference>
<dbReference type="NCBIfam" id="NF003455">
    <property type="entry name" value="PRK05054.1"/>
    <property type="match status" value="1"/>
</dbReference>
<dbReference type="NCBIfam" id="TIGR02062">
    <property type="entry name" value="RNase_B"/>
    <property type="match status" value="1"/>
</dbReference>
<dbReference type="PANTHER" id="PTHR23355:SF37">
    <property type="entry name" value="EXORIBONUCLEASE 2"/>
    <property type="match status" value="1"/>
</dbReference>
<dbReference type="PANTHER" id="PTHR23355">
    <property type="entry name" value="RIBONUCLEASE"/>
    <property type="match status" value="1"/>
</dbReference>
<dbReference type="Pfam" id="PF08206">
    <property type="entry name" value="OB_RNB"/>
    <property type="match status" value="1"/>
</dbReference>
<dbReference type="Pfam" id="PF00773">
    <property type="entry name" value="RNB"/>
    <property type="match status" value="1"/>
</dbReference>
<dbReference type="Pfam" id="PF00575">
    <property type="entry name" value="S1"/>
    <property type="match status" value="1"/>
</dbReference>
<dbReference type="SMART" id="SM00357">
    <property type="entry name" value="CSP"/>
    <property type="match status" value="1"/>
</dbReference>
<dbReference type="SMART" id="SM00955">
    <property type="entry name" value="RNB"/>
    <property type="match status" value="1"/>
</dbReference>
<dbReference type="SMART" id="SM00316">
    <property type="entry name" value="S1"/>
    <property type="match status" value="1"/>
</dbReference>
<dbReference type="SUPFAM" id="SSF50249">
    <property type="entry name" value="Nucleic acid-binding proteins"/>
    <property type="match status" value="4"/>
</dbReference>
<dbReference type="PROSITE" id="PS01175">
    <property type="entry name" value="RIBONUCLEASE_II"/>
    <property type="match status" value="1"/>
</dbReference>
<dbReference type="PROSITE" id="PS50126">
    <property type="entry name" value="S1"/>
    <property type="match status" value="1"/>
</dbReference>
<accession>A5UFG3</accession>
<sequence>MFQDNPLLAQLKQQIHDSKEQVEGVVKSTDKAYGFLECDKKTYFIAPPSMKKVMHGDKIKATIEKQGDKEQAEPESLIEPMLTRFIAKVRFNKDKKLQVLVDHPNINQPIGAQQAKSVKEELQEGDWVVANLKTHPLRDDRFFYATINQFICRAEDELAPWWVTLARHEQSRYPVRGAEPYEMLDQKTRENLTALHFVTIDSESTMDMDDALYIEPIAQNSTQTGWKLVVAIADPTAYIALDSQIEQEAKQRCFTNYLPGFNIPMLPRELSDELCSLIANETRPALVCYIETDLAGNITAKPNFVSAYVQSKAKLAYNKVSDYLEQADNAWQPEMPEIAQQIHWLHQFTKARIQWRKTHSLFFKEKPDYTFVLAENGKVQEIKAEYRRIANQIVEEAMIIANICAAQFLHEQAKTGIFNTHSGFDKKFLENAHNFLMANLANEQNQTELAERYSVENLATLNGYCQMRHDIEPIESDYLELRLRRYLTFAEFKSELAPHFGLGLEGYATWTSPIRKYSDMVNHRLIKAVLAKQPYEKPQNDVLARLQEARRQNRLVERDIADWLYCRYLADKVASNAEFEAEVQDVMRAGLRVQLLENGASLFIPAATLHNNKEEIQLNPDELALYIKGDRTYKIGDIVKVKLTEVKEATRSIVGEILQ</sequence>
<evidence type="ECO:0000255" key="1"/>
<evidence type="ECO:0000255" key="2">
    <source>
        <dbReference type="HAMAP-Rule" id="MF_01036"/>
    </source>
</evidence>
<proteinExistence type="inferred from homology"/>
<gene>
    <name evidence="2" type="primary">rnb</name>
    <name type="ordered locus">CGSHiGG_02405</name>
</gene>
<reference key="1">
    <citation type="journal article" date="2007" name="Genome Biol.">
        <title>Characterization and modeling of the Haemophilus influenzae core and supragenomes based on the complete genomic sequences of Rd and 12 clinical nontypeable strains.</title>
        <authorList>
            <person name="Hogg J.S."/>
            <person name="Hu F.Z."/>
            <person name="Janto B."/>
            <person name="Boissy R."/>
            <person name="Hayes J."/>
            <person name="Keefe R."/>
            <person name="Post J.C."/>
            <person name="Ehrlich G.D."/>
        </authorList>
    </citation>
    <scope>NUCLEOTIDE SEQUENCE [LARGE SCALE GENOMIC DNA]</scope>
    <source>
        <strain>PittGG</strain>
    </source>
</reference>